<feature type="chain" id="PRO_0000095372" description="Tyrosine recombinase XerD">
    <location>
        <begin position="1"/>
        <end position="308"/>
    </location>
</feature>
<feature type="domain" description="Core-binding (CB)" evidence="3">
    <location>
        <begin position="3"/>
        <end position="89"/>
    </location>
</feature>
<feature type="domain" description="Tyr recombinase" evidence="2">
    <location>
        <begin position="110"/>
        <end position="301"/>
    </location>
</feature>
<feature type="active site" evidence="1">
    <location>
        <position position="153"/>
    </location>
</feature>
<feature type="active site" evidence="1">
    <location>
        <position position="177"/>
    </location>
</feature>
<feature type="active site" evidence="1">
    <location>
        <position position="253"/>
    </location>
</feature>
<feature type="active site" evidence="1">
    <location>
        <position position="256"/>
    </location>
</feature>
<feature type="active site" evidence="1">
    <location>
        <position position="279"/>
    </location>
</feature>
<feature type="active site" description="O-(3'-phospho-DNA)-tyrosine intermediate" evidence="1">
    <location>
        <position position="288"/>
    </location>
</feature>
<sequence length="308" mass="33696">MTNGFTRLTEQFLIHIGVERGLATATVTAYESDIAKYIDWLETRGIHEPDAITKQDVEDYIAALDQAGESARSKARRLASIHEFHRFALGQHAVTADVSAAVKAPKGASTLPDVLTVDEVTRLLDAAAVGGSTDPVVLRDKALLEFMYATGCRVSEATGANLDDIDLDEHIARLMGKGSKQRLVPLGSYACRAITAYLNAGRGELEQRSSAKIPERRALFLNKRGKRISRQSVWEIVKATGERAGITKPLHPHTLRHSFATHLIQGGADVRTVQELLGHASVTTTQIYTHVSPETLIETYLTSHPRAR</sequence>
<keyword id="KW-0131">Cell cycle</keyword>
<keyword id="KW-0132">Cell division</keyword>
<keyword id="KW-0159">Chromosome partition</keyword>
<keyword id="KW-0963">Cytoplasm</keyword>
<keyword id="KW-0229">DNA integration</keyword>
<keyword id="KW-0233">DNA recombination</keyword>
<keyword id="KW-0238">DNA-binding</keyword>
<keyword id="KW-1185">Reference proteome</keyword>
<evidence type="ECO:0000255" key="1">
    <source>
        <dbReference type="HAMAP-Rule" id="MF_01807"/>
    </source>
</evidence>
<evidence type="ECO:0000255" key="2">
    <source>
        <dbReference type="PROSITE-ProRule" id="PRU01246"/>
    </source>
</evidence>
<evidence type="ECO:0000255" key="3">
    <source>
        <dbReference type="PROSITE-ProRule" id="PRU01248"/>
    </source>
</evidence>
<proteinExistence type="inferred from homology"/>
<name>XERD_BIFLO</name>
<dbReference type="EMBL" id="AE014295">
    <property type="protein sequence ID" value="AAN25169.1"/>
    <property type="molecule type" value="Genomic_DNA"/>
</dbReference>
<dbReference type="RefSeq" id="NP_696533.1">
    <property type="nucleotide sequence ID" value="NC_004307.2"/>
</dbReference>
<dbReference type="RefSeq" id="WP_011068014.1">
    <property type="nucleotide sequence ID" value="NC_004307.2"/>
</dbReference>
<dbReference type="SMR" id="Q7ZAP1"/>
<dbReference type="STRING" id="206672.BL1368"/>
<dbReference type="EnsemblBacteria" id="AAN25169">
    <property type="protein sequence ID" value="AAN25169"/>
    <property type="gene ID" value="BL1368"/>
</dbReference>
<dbReference type="KEGG" id="blo:BL1368"/>
<dbReference type="PATRIC" id="fig|206672.9.peg.228"/>
<dbReference type="HOGENOM" id="CLU_027562_9_0_11"/>
<dbReference type="OrthoDB" id="9801717at2"/>
<dbReference type="PhylomeDB" id="Q7ZAP1"/>
<dbReference type="Proteomes" id="UP000000439">
    <property type="component" value="Chromosome"/>
</dbReference>
<dbReference type="GO" id="GO:0005737">
    <property type="term" value="C:cytoplasm"/>
    <property type="evidence" value="ECO:0007669"/>
    <property type="project" value="UniProtKB-SubCell"/>
</dbReference>
<dbReference type="GO" id="GO:0003677">
    <property type="term" value="F:DNA binding"/>
    <property type="evidence" value="ECO:0007669"/>
    <property type="project" value="UniProtKB-KW"/>
</dbReference>
<dbReference type="GO" id="GO:0009037">
    <property type="term" value="F:tyrosine-based site-specific recombinase activity"/>
    <property type="evidence" value="ECO:0007669"/>
    <property type="project" value="UniProtKB-UniRule"/>
</dbReference>
<dbReference type="GO" id="GO:0051301">
    <property type="term" value="P:cell division"/>
    <property type="evidence" value="ECO:0007669"/>
    <property type="project" value="UniProtKB-KW"/>
</dbReference>
<dbReference type="GO" id="GO:0007059">
    <property type="term" value="P:chromosome segregation"/>
    <property type="evidence" value="ECO:0007669"/>
    <property type="project" value="UniProtKB-UniRule"/>
</dbReference>
<dbReference type="GO" id="GO:0006313">
    <property type="term" value="P:DNA transposition"/>
    <property type="evidence" value="ECO:0007669"/>
    <property type="project" value="UniProtKB-UniRule"/>
</dbReference>
<dbReference type="CDD" id="cd00798">
    <property type="entry name" value="INT_XerDC_C"/>
    <property type="match status" value="1"/>
</dbReference>
<dbReference type="Gene3D" id="1.10.150.130">
    <property type="match status" value="1"/>
</dbReference>
<dbReference type="Gene3D" id="1.10.443.10">
    <property type="entry name" value="Intergrase catalytic core"/>
    <property type="match status" value="1"/>
</dbReference>
<dbReference type="HAMAP" id="MF_01808">
    <property type="entry name" value="Recomb_XerC_XerD"/>
    <property type="match status" value="1"/>
</dbReference>
<dbReference type="HAMAP" id="MF_01807">
    <property type="entry name" value="Recomb_XerD"/>
    <property type="match status" value="1"/>
</dbReference>
<dbReference type="InterPro" id="IPR044068">
    <property type="entry name" value="CB"/>
</dbReference>
<dbReference type="InterPro" id="IPR011010">
    <property type="entry name" value="DNA_brk_join_enz"/>
</dbReference>
<dbReference type="InterPro" id="IPR013762">
    <property type="entry name" value="Integrase-like_cat_sf"/>
</dbReference>
<dbReference type="InterPro" id="IPR002104">
    <property type="entry name" value="Integrase_catalytic"/>
</dbReference>
<dbReference type="InterPro" id="IPR010998">
    <property type="entry name" value="Integrase_recombinase_N"/>
</dbReference>
<dbReference type="InterPro" id="IPR004107">
    <property type="entry name" value="Integrase_SAM-like_N"/>
</dbReference>
<dbReference type="InterPro" id="IPR011932">
    <property type="entry name" value="Recomb_XerD"/>
</dbReference>
<dbReference type="InterPro" id="IPR023009">
    <property type="entry name" value="Tyrosine_recombinase_XerC/XerD"/>
</dbReference>
<dbReference type="InterPro" id="IPR050090">
    <property type="entry name" value="Tyrosine_recombinase_XerCD"/>
</dbReference>
<dbReference type="NCBIfam" id="NF001399">
    <property type="entry name" value="PRK00283.1"/>
    <property type="match status" value="1"/>
</dbReference>
<dbReference type="NCBIfam" id="TIGR02225">
    <property type="entry name" value="recomb_XerD"/>
    <property type="match status" value="1"/>
</dbReference>
<dbReference type="PANTHER" id="PTHR30349">
    <property type="entry name" value="PHAGE INTEGRASE-RELATED"/>
    <property type="match status" value="1"/>
</dbReference>
<dbReference type="PANTHER" id="PTHR30349:SF81">
    <property type="entry name" value="TYROSINE RECOMBINASE XERC"/>
    <property type="match status" value="1"/>
</dbReference>
<dbReference type="Pfam" id="PF02899">
    <property type="entry name" value="Phage_int_SAM_1"/>
    <property type="match status" value="1"/>
</dbReference>
<dbReference type="Pfam" id="PF00589">
    <property type="entry name" value="Phage_integrase"/>
    <property type="match status" value="1"/>
</dbReference>
<dbReference type="SUPFAM" id="SSF56349">
    <property type="entry name" value="DNA breaking-rejoining enzymes"/>
    <property type="match status" value="1"/>
</dbReference>
<dbReference type="PROSITE" id="PS51900">
    <property type="entry name" value="CB"/>
    <property type="match status" value="1"/>
</dbReference>
<dbReference type="PROSITE" id="PS51898">
    <property type="entry name" value="TYR_RECOMBINASE"/>
    <property type="match status" value="1"/>
</dbReference>
<protein>
    <recommendedName>
        <fullName evidence="1">Tyrosine recombinase XerD</fullName>
    </recommendedName>
</protein>
<comment type="function">
    <text evidence="1">Site-specific tyrosine recombinase, which acts by catalyzing the cutting and rejoining of the recombining DNA molecules. The XerC-XerD complex is essential to convert dimers of the bacterial chromosome into monomers to permit their segregation at cell division. It also contributes to the segregational stability of plasmids.</text>
</comment>
<comment type="subunit">
    <text evidence="1">Forms a cyclic heterotetrameric complex composed of two molecules of XerC and two molecules of XerD.</text>
</comment>
<comment type="subcellular location">
    <subcellularLocation>
        <location evidence="1">Cytoplasm</location>
    </subcellularLocation>
</comment>
<comment type="similarity">
    <text evidence="1">Belongs to the 'phage' integrase family. XerD subfamily.</text>
</comment>
<organism>
    <name type="scientific">Bifidobacterium longum (strain NCC 2705)</name>
    <dbReference type="NCBI Taxonomy" id="206672"/>
    <lineage>
        <taxon>Bacteria</taxon>
        <taxon>Bacillati</taxon>
        <taxon>Actinomycetota</taxon>
        <taxon>Actinomycetes</taxon>
        <taxon>Bifidobacteriales</taxon>
        <taxon>Bifidobacteriaceae</taxon>
        <taxon>Bifidobacterium</taxon>
    </lineage>
</organism>
<accession>Q7ZAP1</accession>
<gene>
    <name evidence="1" type="primary">xerD</name>
    <name type="ordered locus">BL1368</name>
</gene>
<reference key="1">
    <citation type="journal article" date="2002" name="Proc. Natl. Acad. Sci. U.S.A.">
        <title>The genome sequence of Bifidobacterium longum reflects its adaptation to the human gastrointestinal tract.</title>
        <authorList>
            <person name="Schell M.A."/>
            <person name="Karmirantzou M."/>
            <person name="Snel B."/>
            <person name="Vilanova D."/>
            <person name="Berger B."/>
            <person name="Pessi G."/>
            <person name="Zwahlen M.-C."/>
            <person name="Desiere F."/>
            <person name="Bork P."/>
            <person name="Delley M."/>
            <person name="Pridmore R.D."/>
            <person name="Arigoni F."/>
        </authorList>
    </citation>
    <scope>NUCLEOTIDE SEQUENCE [LARGE SCALE GENOMIC DNA]</scope>
    <source>
        <strain>NCC 2705</strain>
    </source>
</reference>